<accession>O71193</accession>
<reference key="1">
    <citation type="journal article" date="1998" name="J. Gen. Virol.">
        <title>Nucleotide sequence of the 3'-terminal two-thirds of the grapevine leafroll-associated virus-3 genome reveals a typical monopartite closterovirus.</title>
        <authorList>
            <person name="Ling K.S."/>
            <person name="Zhu H.Y."/>
            <person name="Drong R.F."/>
            <person name="Slightom J.L."/>
            <person name="McFerson J.R."/>
            <person name="Gonsalves D."/>
        </authorList>
    </citation>
    <scope>NUCLEOTIDE SEQUENCE [GENOMIC RNA]</scope>
</reference>
<organismHost>
    <name type="scientific">Vitis vinifera</name>
    <name type="common">Grape</name>
    <dbReference type="NCBI Taxonomy" id="29760"/>
</organismHost>
<organism>
    <name type="scientific">Grapevine leafroll-associated virus 3 (isolate United States/NY1)</name>
    <name type="common">GLRaV-3</name>
    <name type="synonym">Grapevine leafroll-associated closterovirus (isolate 109)</name>
    <dbReference type="NCBI Taxonomy" id="651354"/>
    <lineage>
        <taxon>Viruses</taxon>
        <taxon>Riboviria</taxon>
        <taxon>Orthornavirae</taxon>
        <taxon>Kitrinoviricota</taxon>
        <taxon>Alsuviricetes</taxon>
        <taxon>Martellivirales</taxon>
        <taxon>Closteroviridae</taxon>
        <taxon>Ampelovirus</taxon>
        <taxon>Grapevine leafroll-associated virus 3</taxon>
    </lineage>
</organism>
<name>P21_GLRV3</name>
<gene>
    <name type="ORF">ORF8</name>
</gene>
<protein>
    <recommendedName>
        <fullName>Protein P21</fullName>
    </recommendedName>
    <alternativeName>
        <fullName>21 kDa protein</fullName>
    </alternativeName>
</protein>
<keyword id="KW-1185">Reference proteome</keyword>
<proteinExistence type="predicted"/>
<dbReference type="EMBL" id="AF037268">
    <property type="protein sequence ID" value="AAC40712.1"/>
    <property type="molecule type" value="Genomic_RNA"/>
</dbReference>
<dbReference type="EMBL" id="GQ352631">
    <property type="protein sequence ID" value="ADI49420.1"/>
    <property type="molecule type" value="Genomic_RNA"/>
</dbReference>
<dbReference type="RefSeq" id="NP_813803.1">
    <property type="nucleotide sequence ID" value="NC_004667.1"/>
</dbReference>
<dbReference type="KEGG" id="vg:1444465"/>
<dbReference type="Proteomes" id="UP000006707">
    <property type="component" value="Segment"/>
</dbReference>
<feature type="chain" id="PRO_0000402519" description="Protein P21">
    <location>
        <begin position="1"/>
        <end position="185"/>
    </location>
</feature>
<sequence length="185" mass="21246">MEFRPVLITVRRDPGVNTGSLKVIAYDLHYDNIFDNCAVKSFRDTDTGFTVMKEYSTNSAFILSPYKLFSAVFNKEGEMISNDVGSSFRVYNIFSQMCKDINEISEIQRAGYLETYLGDGQADTDIFFDVLTNNKAKVRWLVNKDHSAWCGILNDLKWEESNKEKFKGRDILDTYVLSSDYPGFK</sequence>